<proteinExistence type="predicted"/>
<evidence type="ECO:0000269" key="1">
    <source>
    </source>
</evidence>
<evidence type="ECO:0000303" key="2">
    <source>
    </source>
</evidence>
<evidence type="ECO:0000305" key="3"/>
<evidence type="ECO:0000312" key="4">
    <source>
        <dbReference type="EMBL" id="ERA40829.1"/>
    </source>
</evidence>
<gene>
    <name evidence="2" type="primary">druA</name>
    <name evidence="4" type="ORF">H003_04354</name>
</gene>
<comment type="function">
    <text evidence="1">Component of antiviral defense system Druantia type I, composed of DruA, DruB, DruC, DruD and DruE. Expression of Druantia in E.coli (strain MG1655) confers resistance to phage lambda, SECphi18, SECphi27 and T4.</text>
</comment>
<comment type="subcellular location">
    <subcellularLocation>
        <location evidence="3">Cytoplasm</location>
    </subcellularLocation>
</comment>
<sequence>MHKDPSIIVNINLREAKLKKKVREHLQSLGFTRSDSGALQAPGNTKDVIRALHSSQRAERIFANQKFITLRAAKLIKFFASGNEVIPDKISPVLERVKSGTWQGDLFRLAALTWSVPVSSGFGRRLRYLVWDESNGKLIGLIAIGDPVFNLAVRDNLIGWDTHARSSRLVNLMDAYVLGALPPYNALLGGKLIACLLRSRDLYDDFAKVYGDTVGVISQKKKQARLLAITTTSSMGRSSVYNRLKLDGIQYLKSIGYTGGWGHFHIPDSLFIELRDYLRDMDHAYADHYMFGNGPNWRLRTTKAALNVLGFRDNLMKHGIQREVFISQLAENATSILQTGKGEPDLTSLLSAKEIAECAMARWMVPRSIRNPEYRLWKARDLFDFISNDSLKFPPSDEIAKTVV</sequence>
<dbReference type="EMBL" id="AWEM01000032">
    <property type="protein sequence ID" value="ERA40829.1"/>
    <property type="molecule type" value="Genomic_DNA"/>
</dbReference>
<dbReference type="RefSeq" id="WP_000548583.1">
    <property type="nucleotide sequence ID" value="NZ_KE702725.1"/>
</dbReference>
<dbReference type="GO" id="GO:0005737">
    <property type="term" value="C:cytoplasm"/>
    <property type="evidence" value="ECO:0007669"/>
    <property type="project" value="UniProtKB-SubCell"/>
</dbReference>
<dbReference type="GO" id="GO:0051607">
    <property type="term" value="P:defense response to virus"/>
    <property type="evidence" value="ECO:0007669"/>
    <property type="project" value="UniProtKB-KW"/>
</dbReference>
<dbReference type="InterPro" id="IPR025639">
    <property type="entry name" value="DruA"/>
</dbReference>
<dbReference type="Pfam" id="PF14236">
    <property type="entry name" value="DruA"/>
    <property type="match status" value="1"/>
</dbReference>
<reference key="1">
    <citation type="submission" date="2013-07" db="EMBL/GenBank/DDBJ databases">
        <title>The Genome Sequence of Escherichia coli UMEA 4076-1.</title>
        <authorList>
            <consortium name="The Broad Institute Genome Sequencing Platform"/>
            <consortium name="The Broad Institute Genome Sequencing Center for Infectious Disease"/>
            <person name="Feldgarden M."/>
            <person name="Frimodt-Moller N."/>
            <person name="Leihof R.F."/>
            <person name="Rasmussen L."/>
            <person name="Young S.K."/>
            <person name="Zeng Q."/>
            <person name="Gargeya S."/>
            <person name="Abouelleil A."/>
            <person name="Alvarado L."/>
            <person name="Berlin A.M."/>
            <person name="Chapman S.B."/>
            <person name="Gainer-Dewar J."/>
            <person name="Goldberg J."/>
            <person name="Gnerre S."/>
            <person name="Griggs A."/>
            <person name="Gujja S."/>
            <person name="Hansen M."/>
            <person name="Howarth C."/>
            <person name="Imamovic A."/>
            <person name="Larimer J."/>
            <person name="McCowan C."/>
            <person name="Murphy C."/>
            <person name="Pearson M."/>
            <person name="Poon T."/>
            <person name="Priest M."/>
            <person name="Roberts A."/>
            <person name="Saif S."/>
            <person name="Shea T."/>
            <person name="Sykes S."/>
            <person name="Wortman J."/>
            <person name="Nusbaum C."/>
            <person name="Birren B."/>
        </authorList>
    </citation>
    <scope>NUCLEOTIDE SEQUENCE [LARGE SCALE GENOMIC DNA]</scope>
    <source>
        <strain>UMEA 4076-1</strain>
    </source>
</reference>
<reference key="2">
    <citation type="journal article" date="2018" name="Science">
        <title>Systematic discovery of antiphage defense systems in the microbial pangenome.</title>
        <authorList>
            <person name="Doron S."/>
            <person name="Melamed S."/>
            <person name="Ofir G."/>
            <person name="Leavitt A."/>
            <person name="Lopatina A."/>
            <person name="Keren M."/>
            <person name="Amitai G."/>
            <person name="Sorek R."/>
        </authorList>
    </citation>
    <scope>FUNCTION</scope>
    <source>
        <strain>UMEA 4076-1</strain>
    </source>
</reference>
<name>DRUA_ECOU4</name>
<organism>
    <name type="scientific">Escherichia coli (strain UMEA 4076-1)</name>
    <dbReference type="NCBI Taxonomy" id="1281278"/>
    <lineage>
        <taxon>Bacteria</taxon>
        <taxon>Pseudomonadati</taxon>
        <taxon>Pseudomonadota</taxon>
        <taxon>Gammaproteobacteria</taxon>
        <taxon>Enterobacterales</taxon>
        <taxon>Enterobacteriaceae</taxon>
        <taxon>Escherichia</taxon>
    </lineage>
</organism>
<keyword id="KW-0051">Antiviral defense</keyword>
<keyword id="KW-0963">Cytoplasm</keyword>
<feature type="chain" id="PRO_0000456314" description="Druantia protein DruA">
    <location>
        <begin position="1"/>
        <end position="404"/>
    </location>
</feature>
<protein>
    <recommendedName>
        <fullName evidence="2">Druantia protein DruA</fullName>
    </recommendedName>
</protein>
<accession>P0DW34</accession>